<organism>
    <name type="scientific">Methylococcus capsulatus (strain ATCC 33009 / NCIMB 11132 / Bath)</name>
    <dbReference type="NCBI Taxonomy" id="243233"/>
    <lineage>
        <taxon>Bacteria</taxon>
        <taxon>Pseudomonadati</taxon>
        <taxon>Pseudomonadota</taxon>
        <taxon>Gammaproteobacteria</taxon>
        <taxon>Methylococcales</taxon>
        <taxon>Methylococcaceae</taxon>
        <taxon>Methylococcus</taxon>
    </lineage>
</organism>
<dbReference type="EMBL" id="AE017282">
    <property type="protein sequence ID" value="AAU90747.1"/>
    <property type="molecule type" value="Genomic_DNA"/>
</dbReference>
<dbReference type="RefSeq" id="WP_010959381.1">
    <property type="nucleotide sequence ID" value="NC_002977.6"/>
</dbReference>
<dbReference type="SMR" id="Q60CR8"/>
<dbReference type="STRING" id="243233.MCA0008"/>
<dbReference type="GeneID" id="88222361"/>
<dbReference type="KEGG" id="mca:MCA0008"/>
<dbReference type="eggNOG" id="COG0711">
    <property type="taxonomic scope" value="Bacteria"/>
</dbReference>
<dbReference type="HOGENOM" id="CLU_079215_4_5_6"/>
<dbReference type="Proteomes" id="UP000006821">
    <property type="component" value="Chromosome"/>
</dbReference>
<dbReference type="GO" id="GO:0005886">
    <property type="term" value="C:plasma membrane"/>
    <property type="evidence" value="ECO:0007669"/>
    <property type="project" value="UniProtKB-SubCell"/>
</dbReference>
<dbReference type="GO" id="GO:0045259">
    <property type="term" value="C:proton-transporting ATP synthase complex"/>
    <property type="evidence" value="ECO:0007669"/>
    <property type="project" value="UniProtKB-KW"/>
</dbReference>
<dbReference type="GO" id="GO:0046933">
    <property type="term" value="F:proton-transporting ATP synthase activity, rotational mechanism"/>
    <property type="evidence" value="ECO:0007669"/>
    <property type="project" value="UniProtKB-UniRule"/>
</dbReference>
<dbReference type="GO" id="GO:0046961">
    <property type="term" value="F:proton-transporting ATPase activity, rotational mechanism"/>
    <property type="evidence" value="ECO:0007669"/>
    <property type="project" value="TreeGrafter"/>
</dbReference>
<dbReference type="CDD" id="cd06503">
    <property type="entry name" value="ATP-synt_Fo_b"/>
    <property type="match status" value="1"/>
</dbReference>
<dbReference type="FunFam" id="1.20.5.620:FF:000001">
    <property type="entry name" value="ATP synthase subunit b"/>
    <property type="match status" value="1"/>
</dbReference>
<dbReference type="Gene3D" id="1.20.5.620">
    <property type="entry name" value="F1F0 ATP synthase subunit B, membrane domain"/>
    <property type="match status" value="1"/>
</dbReference>
<dbReference type="HAMAP" id="MF_01398">
    <property type="entry name" value="ATP_synth_b_bprime"/>
    <property type="match status" value="1"/>
</dbReference>
<dbReference type="InterPro" id="IPR028987">
    <property type="entry name" value="ATP_synth_B-like_membr_sf"/>
</dbReference>
<dbReference type="InterPro" id="IPR002146">
    <property type="entry name" value="ATP_synth_b/b'su_bac/chlpt"/>
</dbReference>
<dbReference type="InterPro" id="IPR005864">
    <property type="entry name" value="ATP_synth_F0_bsu_bac"/>
</dbReference>
<dbReference type="InterPro" id="IPR050059">
    <property type="entry name" value="ATP_synthase_B_chain"/>
</dbReference>
<dbReference type="NCBIfam" id="TIGR01144">
    <property type="entry name" value="ATP_synt_b"/>
    <property type="match status" value="1"/>
</dbReference>
<dbReference type="NCBIfam" id="NF004411">
    <property type="entry name" value="PRK05759.1-2"/>
    <property type="match status" value="1"/>
</dbReference>
<dbReference type="PANTHER" id="PTHR33445:SF1">
    <property type="entry name" value="ATP SYNTHASE SUBUNIT B"/>
    <property type="match status" value="1"/>
</dbReference>
<dbReference type="PANTHER" id="PTHR33445">
    <property type="entry name" value="ATP SYNTHASE SUBUNIT B', CHLOROPLASTIC"/>
    <property type="match status" value="1"/>
</dbReference>
<dbReference type="Pfam" id="PF00430">
    <property type="entry name" value="ATP-synt_B"/>
    <property type="match status" value="1"/>
</dbReference>
<dbReference type="SUPFAM" id="SSF81573">
    <property type="entry name" value="F1F0 ATP synthase subunit B, membrane domain"/>
    <property type="match status" value="1"/>
</dbReference>
<feature type="chain" id="PRO_0000368589" description="ATP synthase subunit b 1">
    <location>
        <begin position="1"/>
        <end position="157"/>
    </location>
</feature>
<feature type="transmembrane region" description="Helical" evidence="1">
    <location>
        <begin position="7"/>
        <end position="29"/>
    </location>
</feature>
<accession>Q60CR8</accession>
<keyword id="KW-0066">ATP synthesis</keyword>
<keyword id="KW-0997">Cell inner membrane</keyword>
<keyword id="KW-1003">Cell membrane</keyword>
<keyword id="KW-0138">CF(0)</keyword>
<keyword id="KW-0375">Hydrogen ion transport</keyword>
<keyword id="KW-0406">Ion transport</keyword>
<keyword id="KW-0472">Membrane</keyword>
<keyword id="KW-1185">Reference proteome</keyword>
<keyword id="KW-0812">Transmembrane</keyword>
<keyword id="KW-1133">Transmembrane helix</keyword>
<keyword id="KW-0813">Transport</keyword>
<name>ATPF1_METCA</name>
<proteinExistence type="inferred from homology"/>
<sequence length="157" mass="17503">MNINATLFGQMVTFALLVWFTMKYVWPPLLQALEERKKKIAEGLAAAEKGKHEMELAEKRATAALKEAKDQAAEIVNQAQKRANALVDESKEAAKIEGERILANARSEIDRELENAKEELRKQVSALAISAAEKILQREVDQKKHKEILAGLGKQLG</sequence>
<gene>
    <name evidence="1" type="primary">atpF1</name>
    <name type="ordered locus">MCA0008</name>
</gene>
<evidence type="ECO:0000255" key="1">
    <source>
        <dbReference type="HAMAP-Rule" id="MF_01398"/>
    </source>
</evidence>
<reference key="1">
    <citation type="journal article" date="2004" name="PLoS Biol.">
        <title>Genomic insights into methanotrophy: the complete genome sequence of Methylococcus capsulatus (Bath).</title>
        <authorList>
            <person name="Ward N.L."/>
            <person name="Larsen O."/>
            <person name="Sakwa J."/>
            <person name="Bruseth L."/>
            <person name="Khouri H.M."/>
            <person name="Durkin A.S."/>
            <person name="Dimitrov G."/>
            <person name="Jiang L."/>
            <person name="Scanlan D."/>
            <person name="Kang K.H."/>
            <person name="Lewis M.R."/>
            <person name="Nelson K.E."/>
            <person name="Methe B.A."/>
            <person name="Wu M."/>
            <person name="Heidelberg J.F."/>
            <person name="Paulsen I.T."/>
            <person name="Fouts D.E."/>
            <person name="Ravel J."/>
            <person name="Tettelin H."/>
            <person name="Ren Q."/>
            <person name="Read T.D."/>
            <person name="DeBoy R.T."/>
            <person name="Seshadri R."/>
            <person name="Salzberg S.L."/>
            <person name="Jensen H.B."/>
            <person name="Birkeland N.K."/>
            <person name="Nelson W.C."/>
            <person name="Dodson R.J."/>
            <person name="Grindhaug S.H."/>
            <person name="Holt I.E."/>
            <person name="Eidhammer I."/>
            <person name="Jonasen I."/>
            <person name="Vanaken S."/>
            <person name="Utterback T.R."/>
            <person name="Feldblyum T.V."/>
            <person name="Fraser C.M."/>
            <person name="Lillehaug J.R."/>
            <person name="Eisen J.A."/>
        </authorList>
    </citation>
    <scope>NUCLEOTIDE SEQUENCE [LARGE SCALE GENOMIC DNA]</scope>
    <source>
        <strain>ATCC 33009 / NCIMB 11132 / Bath</strain>
    </source>
</reference>
<comment type="function">
    <text evidence="1">F(1)F(0) ATP synthase produces ATP from ADP in the presence of a proton or sodium gradient. F-type ATPases consist of two structural domains, F(1) containing the extramembraneous catalytic core and F(0) containing the membrane proton channel, linked together by a central stalk and a peripheral stalk. During catalysis, ATP synthesis in the catalytic domain of F(1) is coupled via a rotary mechanism of the central stalk subunits to proton translocation.</text>
</comment>
<comment type="function">
    <text evidence="1">Component of the F(0) channel, it forms part of the peripheral stalk, linking F(1) to F(0).</text>
</comment>
<comment type="subunit">
    <text evidence="1">F-type ATPases have 2 components, F(1) - the catalytic core - and F(0) - the membrane proton channel. F(1) has five subunits: alpha(3), beta(3), gamma(1), delta(1), epsilon(1). F(0) has three main subunits: a(1), b(2) and c(10-14). The alpha and beta chains form an alternating ring which encloses part of the gamma chain. F(1) is attached to F(0) by a central stalk formed by the gamma and epsilon chains, while a peripheral stalk is formed by the delta and b chains.</text>
</comment>
<comment type="subcellular location">
    <subcellularLocation>
        <location evidence="1">Cell inner membrane</location>
        <topology evidence="1">Single-pass membrane protein</topology>
    </subcellularLocation>
</comment>
<comment type="similarity">
    <text evidence="1">Belongs to the ATPase B chain family.</text>
</comment>
<protein>
    <recommendedName>
        <fullName evidence="1">ATP synthase subunit b 1</fullName>
    </recommendedName>
    <alternativeName>
        <fullName evidence="1">ATP synthase F(0) sector subunit b 1</fullName>
    </alternativeName>
    <alternativeName>
        <fullName evidence="1">ATPase subunit I 1</fullName>
    </alternativeName>
    <alternativeName>
        <fullName evidence="1">F-type ATPase subunit b 1</fullName>
        <shortName evidence="1">F-ATPase subunit b 1</shortName>
    </alternativeName>
</protein>